<protein>
    <recommendedName>
        <fullName>Fructose-bisphosphate aldolase, chloroplastic</fullName>
        <ecNumber>4.1.2.13</ecNumber>
    </recommendedName>
</protein>
<dbReference type="EC" id="4.1.2.13"/>
<dbReference type="EMBL" id="X66814">
    <property type="protein sequence ID" value="CAA47293.1"/>
    <property type="molecule type" value="mRNA"/>
</dbReference>
<dbReference type="PIR" id="S31090">
    <property type="entry name" value="ADSPAP"/>
</dbReference>
<dbReference type="SMR" id="P16096"/>
<dbReference type="BioCyc" id="MetaCyc:MONOMER-12899"/>
<dbReference type="BRENDA" id="4.1.2.13">
    <property type="organism ID" value="5812"/>
</dbReference>
<dbReference type="SABIO-RK" id="P16096"/>
<dbReference type="UniPathway" id="UPA00109">
    <property type="reaction ID" value="UER00183"/>
</dbReference>
<dbReference type="Proteomes" id="UP001155700">
    <property type="component" value="Unplaced"/>
</dbReference>
<dbReference type="GO" id="GO:0009507">
    <property type="term" value="C:chloroplast"/>
    <property type="evidence" value="ECO:0000314"/>
    <property type="project" value="AgBase"/>
</dbReference>
<dbReference type="GO" id="GO:0005829">
    <property type="term" value="C:cytosol"/>
    <property type="evidence" value="ECO:0000318"/>
    <property type="project" value="GO_Central"/>
</dbReference>
<dbReference type="GO" id="GO:0032991">
    <property type="term" value="C:protein-containing complex"/>
    <property type="evidence" value="ECO:0000314"/>
    <property type="project" value="AgBase"/>
</dbReference>
<dbReference type="GO" id="GO:0004332">
    <property type="term" value="F:fructose-bisphosphate aldolase activity"/>
    <property type="evidence" value="ECO:0000314"/>
    <property type="project" value="AgBase"/>
</dbReference>
<dbReference type="GO" id="GO:0030388">
    <property type="term" value="P:fructose 1,6-bisphosphate metabolic process"/>
    <property type="evidence" value="ECO:0000318"/>
    <property type="project" value="GO_Central"/>
</dbReference>
<dbReference type="GO" id="GO:0006096">
    <property type="term" value="P:glycolytic process"/>
    <property type="evidence" value="ECO:0000318"/>
    <property type="project" value="GO_Central"/>
</dbReference>
<dbReference type="CDD" id="cd00948">
    <property type="entry name" value="FBP_aldolase_I_a"/>
    <property type="match status" value="1"/>
</dbReference>
<dbReference type="FunFam" id="3.20.20.70:FF:000052">
    <property type="entry name" value="Fructose-bisphosphate aldolase"/>
    <property type="match status" value="1"/>
</dbReference>
<dbReference type="Gene3D" id="3.20.20.70">
    <property type="entry name" value="Aldolase class I"/>
    <property type="match status" value="1"/>
</dbReference>
<dbReference type="InterPro" id="IPR029768">
    <property type="entry name" value="Aldolase_I_AS"/>
</dbReference>
<dbReference type="InterPro" id="IPR013785">
    <property type="entry name" value="Aldolase_TIM"/>
</dbReference>
<dbReference type="InterPro" id="IPR000741">
    <property type="entry name" value="FBA_I"/>
</dbReference>
<dbReference type="NCBIfam" id="NF033379">
    <property type="entry name" value="FrucBisAld_I"/>
    <property type="match status" value="1"/>
</dbReference>
<dbReference type="PANTHER" id="PTHR11627">
    <property type="entry name" value="FRUCTOSE-BISPHOSPHATE ALDOLASE"/>
    <property type="match status" value="1"/>
</dbReference>
<dbReference type="Pfam" id="PF00274">
    <property type="entry name" value="Glycolytic"/>
    <property type="match status" value="1"/>
</dbReference>
<dbReference type="SUPFAM" id="SSF51569">
    <property type="entry name" value="Aldolase"/>
    <property type="match status" value="1"/>
</dbReference>
<dbReference type="PROSITE" id="PS00158">
    <property type="entry name" value="ALDOLASE_CLASS_I"/>
    <property type="match status" value="1"/>
</dbReference>
<accession>P16096</accession>
<evidence type="ECO:0000250" key="1"/>
<evidence type="ECO:0000269" key="2">
    <source>
    </source>
</evidence>
<evidence type="ECO:0000305" key="3"/>
<feature type="transit peptide" description="Chloroplast" evidence="2">
    <location>
        <begin position="1"/>
        <end position="46"/>
    </location>
</feature>
<feature type="chain" id="PRO_0000001113" description="Fructose-bisphosphate aldolase, chloroplastic">
    <location>
        <begin position="47"/>
        <end position="394"/>
    </location>
</feature>
<feature type="active site" description="Proton acceptor" evidence="1">
    <location>
        <position position="223"/>
    </location>
</feature>
<feature type="active site" description="Schiff-base intermediate with dihydroxyacetone-P" evidence="1">
    <location>
        <position position="265"/>
    </location>
</feature>
<feature type="binding site" evidence="1">
    <location>
        <position position="93"/>
    </location>
    <ligand>
        <name>substrate</name>
    </ligand>
</feature>
<feature type="binding site" evidence="1">
    <location>
        <position position="183"/>
    </location>
    <ligand>
        <name>substrate</name>
    </ligand>
</feature>
<feature type="site" description="Necessary for preference for fructose 1,6-bisphosphate over fructose 1-phosphate" evidence="1">
    <location>
        <position position="394"/>
    </location>
</feature>
<feature type="sequence conflict" description="In Ref. 1; CAA47293." evidence="3" ref="1">
    <original>EGSS</original>
    <variation>RDP</variation>
    <location>
        <begin position="260"/>
        <end position="263"/>
    </location>
</feature>
<name>ALFC_SPIOL</name>
<comment type="catalytic activity">
    <reaction>
        <text>beta-D-fructose 1,6-bisphosphate = D-glyceraldehyde 3-phosphate + dihydroxyacetone phosphate</text>
        <dbReference type="Rhea" id="RHEA:14729"/>
        <dbReference type="ChEBI" id="CHEBI:32966"/>
        <dbReference type="ChEBI" id="CHEBI:57642"/>
        <dbReference type="ChEBI" id="CHEBI:59776"/>
        <dbReference type="EC" id="4.1.2.13"/>
    </reaction>
</comment>
<comment type="pathway">
    <text>Carbohydrate degradation; glycolysis; D-glyceraldehyde 3-phosphate and glycerone phosphate from D-glucose: step 4/4.</text>
</comment>
<comment type="subcellular location">
    <subcellularLocation>
        <location>Plastid</location>
        <location>Chloroplast</location>
    </subcellularLocation>
</comment>
<comment type="similarity">
    <text evidence="3">Belongs to the class I fructose-bisphosphate aldolase family.</text>
</comment>
<keyword id="KW-0150">Chloroplast</keyword>
<keyword id="KW-0903">Direct protein sequencing</keyword>
<keyword id="KW-0324">Glycolysis</keyword>
<keyword id="KW-0456">Lyase</keyword>
<keyword id="KW-0934">Plastid</keyword>
<keyword id="KW-1185">Reference proteome</keyword>
<keyword id="KW-0704">Schiff base</keyword>
<keyword id="KW-0809">Transit peptide</keyword>
<reference key="1">
    <citation type="journal article" date="1993" name="Plant Mol. Biol.">
        <title>Plant aldolase: cDNA and deduced amino-acid sequences of the chloroplast and cytosol enzyme from spinach.</title>
        <authorList>
            <person name="Pelzer-Reith B."/>
            <person name="Penger A."/>
            <person name="Schnarrenberger C."/>
        </authorList>
    </citation>
    <scope>NUCLEOTIDE SEQUENCE [MRNA]</scope>
</reference>
<reference key="2">
    <citation type="journal article" date="1984" name="J. Biol. Chem.">
        <title>Isolation and characterization of the cytosolic and chloroplast forms of spinach leaf fructose diphosphate aldolase.</title>
        <authorList>
            <person name="Lebherz H.G."/>
            <person name="Leadbetter M.M."/>
            <person name="Bradshaw R.A."/>
        </authorList>
    </citation>
    <scope>PROTEIN SEQUENCE OF 47-64</scope>
</reference>
<reference key="3">
    <citation type="unpublished observations" date="1995-11">
        <authorList>
            <person name="Bairoch A."/>
        </authorList>
    </citation>
    <scope>IDENTIFICATION OF PROBABLE FRAMESHIFT</scope>
</reference>
<proteinExistence type="evidence at protein level"/>
<organism>
    <name type="scientific">Spinacia oleracea</name>
    <name type="common">Spinach</name>
    <dbReference type="NCBI Taxonomy" id="3562"/>
    <lineage>
        <taxon>Eukaryota</taxon>
        <taxon>Viridiplantae</taxon>
        <taxon>Streptophyta</taxon>
        <taxon>Embryophyta</taxon>
        <taxon>Tracheophyta</taxon>
        <taxon>Spermatophyta</taxon>
        <taxon>Magnoliopsida</taxon>
        <taxon>eudicotyledons</taxon>
        <taxon>Gunneridae</taxon>
        <taxon>Pentapetalae</taxon>
        <taxon>Caryophyllales</taxon>
        <taxon>Chenopodiaceae</taxon>
        <taxon>Chenopodioideae</taxon>
        <taxon>Anserineae</taxon>
        <taxon>Spinacia</taxon>
    </lineage>
</organism>
<sequence>MASASLLKTSPVLDNPEFLKGQTLRIPSVAGVRFTPSGSSSLTVRASSYADELVKTAKTVASPGRGILAMDESNATCGKRLASIGLENTEANRQAYRTLLISAPGLGQYVSGAILFEETLYQSTTDGKKMVDVLIEQGIVPGIKVDKGWLPLPGSNDESWCQGLDGLACRSAAYYQQGARFAKWRTVVSIPNGPSALAVKEAAWGLARYAAITQDNGLDPILEPEIMLDGEHGIDRTFRVAQQVWAEVFFNLAENNVLLEGSSLKPSMVGPGALSARKGPPEQVADYPLKLLHRRRGPVVPGIMVLSGGQSEVEATLNLNAMNQSPNPWHVSFSYARALQNTCLKTWVEGQENVKAQDFACAKSNSLAQLGKYTGEGESEERKKDMFVKATLTY</sequence>